<name>ODAD3_HUMAN</name>
<keyword id="KW-0002">3D-structure</keyword>
<keyword id="KW-0025">Alternative splicing</keyword>
<keyword id="KW-0966">Cell projection</keyword>
<keyword id="KW-1186">Ciliopathy</keyword>
<keyword id="KW-0970">Cilium biogenesis/degradation</keyword>
<keyword id="KW-0175">Coiled coil</keyword>
<keyword id="KW-0963">Cytoplasm</keyword>
<keyword id="KW-0206">Cytoskeleton</keyword>
<keyword id="KW-1012">Kartagener syndrome</keyword>
<keyword id="KW-0990">Primary ciliary dyskinesia</keyword>
<keyword id="KW-1267">Proteomics identification</keyword>
<keyword id="KW-1185">Reference proteome</keyword>
<sequence length="595" mass="69140">MTSPLCRAASANALPPQDQASTPSSRVKGREASGKPSHLRGKGTAQAWTPGRSKGGSFHRGAGKPSVHSQVAELHKKIQLLEGDRKAFFESSQWNIKKNQETISQLRKETKALELKLLDLLKGDEKVVQAVIREWKWEKPYLKNRTGQALEHLDHRLREKVKQQNALRHQVVLRQRRLEELQLQHSLRLLEMAEAQNRHTEVAKTMRNLENRLEKAQMKAQEAEHITSVYLQLKAYLMDESLNLENRLDSMEAEVVRTKHELEALHVVNQEALNARDIAKNQLQYLEETLVRERKKRERYISECKKRAEEKKLENERMERKTHREHLLLQSDDTIQDSLHAKEEELRQRWSMYQMEVIFGKVKDATGTDETHSLVRRFLAQGDTFAQLETLKSENEQTLVRLKQEKQQLQRELEDLKYSGEATLVSQQKLQAEAQERLKKEERRHAEAKDQLERALRAMQVAKDSLEHLASKLIHITVEDGRFAGKELDPQADNYVPNLLGLVEEKLLKLQAQLQGHDVQEMLCHIANREFLASLEGRLPEYNTRIALPLATSKDKFFDEESEEEDNEVVTRASLKIRSQKLIESHKKHRRSRRS</sequence>
<proteinExistence type="evidence at protein level"/>
<dbReference type="EMBL" id="AK302113">
    <property type="protein sequence ID" value="BAG63492.1"/>
    <property type="molecule type" value="mRNA"/>
</dbReference>
<dbReference type="EMBL" id="AC024575">
    <property type="status" value="NOT_ANNOTATED_CDS"/>
    <property type="molecule type" value="Genomic_DNA"/>
</dbReference>
<dbReference type="EMBL" id="CH471106">
    <property type="protein sequence ID" value="EAW84213.1"/>
    <property type="molecule type" value="Genomic_DNA"/>
</dbReference>
<dbReference type="EMBL" id="BC014252">
    <property type="protein sequence ID" value="AAH14252.2"/>
    <property type="molecule type" value="mRNA"/>
</dbReference>
<dbReference type="EMBL" id="BC141828">
    <property type="protein sequence ID" value="AAI41829.1"/>
    <property type="molecule type" value="mRNA"/>
</dbReference>
<dbReference type="EMBL" id="BC142637">
    <property type="protein sequence ID" value="AAI42638.1"/>
    <property type="molecule type" value="mRNA"/>
</dbReference>
<dbReference type="CCDS" id="CCDS42501.1">
    <molecule id="A5D8V7-1"/>
</dbReference>
<dbReference type="RefSeq" id="NP_001289382.1">
    <molecule id="A5D8V7-2"/>
    <property type="nucleotide sequence ID" value="NM_001302453.1"/>
</dbReference>
<dbReference type="RefSeq" id="NP_659482.3">
    <molecule id="A5D8V7-1"/>
    <property type="nucleotide sequence ID" value="NM_145045.4"/>
</dbReference>
<dbReference type="PDB" id="8J07">
    <property type="method" value="EM"/>
    <property type="resolution" value="4.10 A"/>
    <property type="chains" value="m8/o8/q8/s8/u8=1-595"/>
</dbReference>
<dbReference type="PDBsum" id="8J07"/>
<dbReference type="EMDB" id="EMD-35888"/>
<dbReference type="SMR" id="A5D8V7"/>
<dbReference type="BioGRID" id="125463">
    <property type="interactions" value="41"/>
</dbReference>
<dbReference type="ComplexPortal" id="CPX-2626">
    <property type="entry name" value="Outer dynein arm-docking complex"/>
</dbReference>
<dbReference type="CORUM" id="A5D8V7"/>
<dbReference type="FunCoup" id="A5D8V7">
    <property type="interactions" value="291"/>
</dbReference>
<dbReference type="IntAct" id="A5D8V7">
    <property type="interactions" value="40"/>
</dbReference>
<dbReference type="MINT" id="A5D8V7"/>
<dbReference type="STRING" id="9606.ENSP00000348757"/>
<dbReference type="GlyGen" id="A5D8V7">
    <property type="glycosylation" value="2 sites, 1 O-linked glycan (2 sites)"/>
</dbReference>
<dbReference type="iPTMnet" id="A5D8V7"/>
<dbReference type="PhosphoSitePlus" id="A5D8V7"/>
<dbReference type="BioMuta" id="CCDC151"/>
<dbReference type="jPOST" id="A5D8V7"/>
<dbReference type="MassIVE" id="A5D8V7"/>
<dbReference type="PaxDb" id="9606-ENSP00000348757"/>
<dbReference type="PeptideAtlas" id="A5D8V7"/>
<dbReference type="ProteomicsDB" id="5469"/>
<dbReference type="ProteomicsDB" id="713">
    <molecule id="A5D8V7-1"/>
</dbReference>
<dbReference type="Pumba" id="A5D8V7"/>
<dbReference type="Antibodypedia" id="25849">
    <property type="antibodies" value="79 antibodies from 16 providers"/>
</dbReference>
<dbReference type="DNASU" id="115948"/>
<dbReference type="Ensembl" id="ENST00000356392.9">
    <molecule id="A5D8V7-1"/>
    <property type="protein sequence ID" value="ENSP00000348757.3"/>
    <property type="gene ID" value="ENSG00000198003.12"/>
</dbReference>
<dbReference type="GeneID" id="115948"/>
<dbReference type="KEGG" id="hsa:115948"/>
<dbReference type="MANE-Select" id="ENST00000356392.9">
    <property type="protein sequence ID" value="ENSP00000348757.3"/>
    <property type="RefSeq nucleotide sequence ID" value="NM_145045.5"/>
    <property type="RefSeq protein sequence ID" value="NP_659482.3"/>
</dbReference>
<dbReference type="UCSC" id="uc002mrs.5">
    <molecule id="A5D8V7-1"/>
    <property type="organism name" value="human"/>
</dbReference>
<dbReference type="AGR" id="HGNC:28303"/>
<dbReference type="CTD" id="115948"/>
<dbReference type="DisGeNET" id="115948"/>
<dbReference type="GeneCards" id="ODAD3"/>
<dbReference type="GeneReviews" id="ODAD3"/>
<dbReference type="HGNC" id="HGNC:28303">
    <property type="gene designation" value="ODAD3"/>
</dbReference>
<dbReference type="HPA" id="ENSG00000198003">
    <property type="expression patterns" value="Tissue enhanced (choroid plexus, parathyroid gland, testis)"/>
</dbReference>
<dbReference type="MalaCards" id="ODAD3"/>
<dbReference type="MIM" id="615956">
    <property type="type" value="gene"/>
</dbReference>
<dbReference type="MIM" id="616037">
    <property type="type" value="phenotype"/>
</dbReference>
<dbReference type="neXtProt" id="NX_A5D8V7"/>
<dbReference type="OpenTargets" id="ENSG00000198003"/>
<dbReference type="Orphanet" id="244">
    <property type="disease" value="Primary ciliary dyskinesia"/>
</dbReference>
<dbReference type="VEuPathDB" id="HostDB:ENSG00000198003"/>
<dbReference type="eggNOG" id="ENOG502QR7A">
    <property type="taxonomic scope" value="Eukaryota"/>
</dbReference>
<dbReference type="GeneTree" id="ENSGT00940000153116"/>
<dbReference type="InParanoid" id="A5D8V7"/>
<dbReference type="OMA" id="VIQEWKS"/>
<dbReference type="OrthoDB" id="10255247at2759"/>
<dbReference type="PAN-GO" id="A5D8V7">
    <property type="GO annotations" value="5 GO annotations based on evolutionary models"/>
</dbReference>
<dbReference type="PhylomeDB" id="A5D8V7"/>
<dbReference type="TreeFam" id="TF324955"/>
<dbReference type="PathwayCommons" id="A5D8V7"/>
<dbReference type="SignaLink" id="A5D8V7"/>
<dbReference type="BioGRID-ORCS" id="115948">
    <property type="hits" value="13 hits in 1148 CRISPR screens"/>
</dbReference>
<dbReference type="ChiTaRS" id="CCDC151">
    <property type="organism name" value="human"/>
</dbReference>
<dbReference type="GenomeRNAi" id="115948"/>
<dbReference type="Pharos" id="A5D8V7">
    <property type="development level" value="Tbio"/>
</dbReference>
<dbReference type="PRO" id="PR:A5D8V7"/>
<dbReference type="Proteomes" id="UP000005640">
    <property type="component" value="Chromosome 19"/>
</dbReference>
<dbReference type="RNAct" id="A5D8V7">
    <property type="molecule type" value="protein"/>
</dbReference>
<dbReference type="Bgee" id="ENSG00000198003">
    <property type="expression patterns" value="Expressed in bronchial epithelial cell and 130 other cell types or tissues"/>
</dbReference>
<dbReference type="ExpressionAtlas" id="A5D8V7">
    <property type="expression patterns" value="baseline and differential"/>
</dbReference>
<dbReference type="GO" id="GO:0005930">
    <property type="term" value="C:axoneme"/>
    <property type="evidence" value="ECO:0000314"/>
    <property type="project" value="UniProtKB"/>
</dbReference>
<dbReference type="GO" id="GO:0005814">
    <property type="term" value="C:centriole"/>
    <property type="evidence" value="ECO:0000250"/>
    <property type="project" value="UniProtKB"/>
</dbReference>
<dbReference type="GO" id="GO:0036064">
    <property type="term" value="C:ciliary basal body"/>
    <property type="evidence" value="ECO:0000250"/>
    <property type="project" value="UniProtKB"/>
</dbReference>
<dbReference type="GO" id="GO:0035253">
    <property type="term" value="C:ciliary rootlet"/>
    <property type="evidence" value="ECO:0000318"/>
    <property type="project" value="GO_Central"/>
</dbReference>
<dbReference type="GO" id="GO:0097542">
    <property type="term" value="C:ciliary tip"/>
    <property type="evidence" value="ECO:0000318"/>
    <property type="project" value="GO_Central"/>
</dbReference>
<dbReference type="GO" id="GO:0005929">
    <property type="term" value="C:cilium"/>
    <property type="evidence" value="ECO:0000250"/>
    <property type="project" value="UniProtKB"/>
</dbReference>
<dbReference type="GO" id="GO:0005576">
    <property type="term" value="C:extracellular region"/>
    <property type="evidence" value="ECO:0007669"/>
    <property type="project" value="GOC"/>
</dbReference>
<dbReference type="GO" id="GO:0120228">
    <property type="term" value="C:outer dynein arm docking complex"/>
    <property type="evidence" value="ECO:0000250"/>
    <property type="project" value="UniProtKB"/>
</dbReference>
<dbReference type="GO" id="GO:0036126">
    <property type="term" value="C:sperm flagellum"/>
    <property type="evidence" value="ECO:0007669"/>
    <property type="project" value="Ensembl"/>
</dbReference>
<dbReference type="GO" id="GO:0007420">
    <property type="term" value="P:brain development"/>
    <property type="evidence" value="ECO:0007669"/>
    <property type="project" value="Ensembl"/>
</dbReference>
<dbReference type="GO" id="GO:0000902">
    <property type="term" value="P:cell morphogenesis"/>
    <property type="evidence" value="ECO:0007669"/>
    <property type="project" value="Ensembl"/>
</dbReference>
<dbReference type="GO" id="GO:0090660">
    <property type="term" value="P:cerebrospinal fluid circulation"/>
    <property type="evidence" value="ECO:0007669"/>
    <property type="project" value="Ensembl"/>
</dbReference>
<dbReference type="GO" id="GO:0003341">
    <property type="term" value="P:cilium movement"/>
    <property type="evidence" value="ECO:0000315"/>
    <property type="project" value="UniProtKB"/>
</dbReference>
<dbReference type="GO" id="GO:0061371">
    <property type="term" value="P:determination of heart left/right asymmetry"/>
    <property type="evidence" value="ECO:0007669"/>
    <property type="project" value="Ensembl"/>
</dbReference>
<dbReference type="GO" id="GO:0007368">
    <property type="term" value="P:determination of left/right symmetry"/>
    <property type="evidence" value="ECO:0000315"/>
    <property type="project" value="SYSCILIA_CCNET"/>
</dbReference>
<dbReference type="GO" id="GO:0060287">
    <property type="term" value="P:epithelial cilium movement involved in determination of left/right asymmetry"/>
    <property type="evidence" value="ECO:0007669"/>
    <property type="project" value="Ensembl"/>
</dbReference>
<dbReference type="GO" id="GO:0030317">
    <property type="term" value="P:flagellated sperm motility"/>
    <property type="evidence" value="ECO:0007669"/>
    <property type="project" value="Ensembl"/>
</dbReference>
<dbReference type="GO" id="GO:0048872">
    <property type="term" value="P:homeostasis of number of cells"/>
    <property type="evidence" value="ECO:0007669"/>
    <property type="project" value="Ensembl"/>
</dbReference>
<dbReference type="GO" id="GO:0035264">
    <property type="term" value="P:multicellular organism growth"/>
    <property type="evidence" value="ECO:0007669"/>
    <property type="project" value="Ensembl"/>
</dbReference>
<dbReference type="GO" id="GO:0036158">
    <property type="term" value="P:outer dynein arm assembly"/>
    <property type="evidence" value="ECO:0000314"/>
    <property type="project" value="SYSCILIA_CCNET"/>
</dbReference>
<dbReference type="GO" id="GO:1902017">
    <property type="term" value="P:regulation of cilium assembly"/>
    <property type="evidence" value="ECO:0000250"/>
    <property type="project" value="UniProtKB"/>
</dbReference>
<dbReference type="GO" id="GO:0072520">
    <property type="term" value="P:seminiferous tubule development"/>
    <property type="evidence" value="ECO:0007669"/>
    <property type="project" value="Ensembl"/>
</dbReference>
<dbReference type="GO" id="GO:0007338">
    <property type="term" value="P:single fertilization"/>
    <property type="evidence" value="ECO:0007669"/>
    <property type="project" value="Ensembl"/>
</dbReference>
<dbReference type="GO" id="GO:0007283">
    <property type="term" value="P:spermatogenesis"/>
    <property type="evidence" value="ECO:0007669"/>
    <property type="project" value="Ensembl"/>
</dbReference>
<dbReference type="InterPro" id="IPR033192">
    <property type="entry name" value="ODAD3"/>
</dbReference>
<dbReference type="PANTHER" id="PTHR46518">
    <property type="entry name" value="COILED-COIL DOMAIN-CONTAINING PROTEIN 151"/>
    <property type="match status" value="1"/>
</dbReference>
<dbReference type="PANTHER" id="PTHR46518:SF1">
    <property type="entry name" value="OUTER DYNEIN ARM-DOCKING COMPLEX SUBUNIT 3"/>
    <property type="match status" value="1"/>
</dbReference>
<feature type="chain" id="PRO_0000321526" description="Outer dynein arm-docking complex subunit 3">
    <location>
        <begin position="1"/>
        <end position="595"/>
    </location>
</feature>
<feature type="region of interest" description="Disordered" evidence="4">
    <location>
        <begin position="1"/>
        <end position="69"/>
    </location>
</feature>
<feature type="coiled-coil region" evidence="3">
    <location>
        <begin position="94"/>
        <end position="327"/>
    </location>
</feature>
<feature type="coiled-coil region" evidence="3">
    <location>
        <begin position="385"/>
        <end position="473"/>
    </location>
</feature>
<feature type="splice variant" id="VSP_056903" description="In isoform 2." evidence="7">
    <original>MTSPLCRAASANALPPQDQASTPSSRVKGREASGKPSHLRGKGTAQAWTPGRSKGGSFHRGAGKPSVHSQVAELHKKIQLL</original>
    <variation>MHPPVAPCKKLRCPPTRSFTPTRGRSK</variation>
    <location>
        <begin position="1"/>
        <end position="81"/>
    </location>
</feature>
<feature type="sequence variant" id="VAR_050743" description="In dbSNP:rs34619515.">
    <original>R</original>
    <variation>P</variation>
    <location>
        <position position="545"/>
    </location>
</feature>
<feature type="sequence conflict" description="In Ref. 4; AAH14252." evidence="8" ref="4">
    <original>A</original>
    <variation>S</variation>
    <location>
        <position position="470"/>
    </location>
</feature>
<evidence type="ECO:0000250" key="1">
    <source>
        <dbReference type="UniProtKB" id="A7MBH5"/>
    </source>
</evidence>
<evidence type="ECO:0000250" key="2">
    <source>
        <dbReference type="UniProtKB" id="Q8BSN3"/>
    </source>
</evidence>
<evidence type="ECO:0000255" key="3"/>
<evidence type="ECO:0000256" key="4">
    <source>
        <dbReference type="SAM" id="MobiDB-lite"/>
    </source>
</evidence>
<evidence type="ECO:0000269" key="5">
    <source>
    </source>
</evidence>
<evidence type="ECO:0000269" key="6">
    <source>
    </source>
</evidence>
<evidence type="ECO:0000303" key="7">
    <source>
    </source>
</evidence>
<evidence type="ECO:0000305" key="8"/>
<evidence type="ECO:0000312" key="9">
    <source>
        <dbReference type="HGNC" id="HGNC:28303"/>
    </source>
</evidence>
<reference key="1">
    <citation type="journal article" date="2004" name="Nat. Genet.">
        <title>Complete sequencing and characterization of 21,243 full-length human cDNAs.</title>
        <authorList>
            <person name="Ota T."/>
            <person name="Suzuki Y."/>
            <person name="Nishikawa T."/>
            <person name="Otsuki T."/>
            <person name="Sugiyama T."/>
            <person name="Irie R."/>
            <person name="Wakamatsu A."/>
            <person name="Hayashi K."/>
            <person name="Sato H."/>
            <person name="Nagai K."/>
            <person name="Kimura K."/>
            <person name="Makita H."/>
            <person name="Sekine M."/>
            <person name="Obayashi M."/>
            <person name="Nishi T."/>
            <person name="Shibahara T."/>
            <person name="Tanaka T."/>
            <person name="Ishii S."/>
            <person name="Yamamoto J."/>
            <person name="Saito K."/>
            <person name="Kawai Y."/>
            <person name="Isono Y."/>
            <person name="Nakamura Y."/>
            <person name="Nagahari K."/>
            <person name="Murakami K."/>
            <person name="Yasuda T."/>
            <person name="Iwayanagi T."/>
            <person name="Wagatsuma M."/>
            <person name="Shiratori A."/>
            <person name="Sudo H."/>
            <person name="Hosoiri T."/>
            <person name="Kaku Y."/>
            <person name="Kodaira H."/>
            <person name="Kondo H."/>
            <person name="Sugawara M."/>
            <person name="Takahashi M."/>
            <person name="Kanda K."/>
            <person name="Yokoi T."/>
            <person name="Furuya T."/>
            <person name="Kikkawa E."/>
            <person name="Omura Y."/>
            <person name="Abe K."/>
            <person name="Kamihara K."/>
            <person name="Katsuta N."/>
            <person name="Sato K."/>
            <person name="Tanikawa M."/>
            <person name="Yamazaki M."/>
            <person name="Ninomiya K."/>
            <person name="Ishibashi T."/>
            <person name="Yamashita H."/>
            <person name="Murakawa K."/>
            <person name="Fujimori K."/>
            <person name="Tanai H."/>
            <person name="Kimata M."/>
            <person name="Watanabe M."/>
            <person name="Hiraoka S."/>
            <person name="Chiba Y."/>
            <person name="Ishida S."/>
            <person name="Ono Y."/>
            <person name="Takiguchi S."/>
            <person name="Watanabe S."/>
            <person name="Yosida M."/>
            <person name="Hotuta T."/>
            <person name="Kusano J."/>
            <person name="Kanehori K."/>
            <person name="Takahashi-Fujii A."/>
            <person name="Hara H."/>
            <person name="Tanase T.-O."/>
            <person name="Nomura Y."/>
            <person name="Togiya S."/>
            <person name="Komai F."/>
            <person name="Hara R."/>
            <person name="Takeuchi K."/>
            <person name="Arita M."/>
            <person name="Imose N."/>
            <person name="Musashino K."/>
            <person name="Yuuki H."/>
            <person name="Oshima A."/>
            <person name="Sasaki N."/>
            <person name="Aotsuka S."/>
            <person name="Yoshikawa Y."/>
            <person name="Matsunawa H."/>
            <person name="Ichihara T."/>
            <person name="Shiohata N."/>
            <person name="Sano S."/>
            <person name="Moriya S."/>
            <person name="Momiyama H."/>
            <person name="Satoh N."/>
            <person name="Takami S."/>
            <person name="Terashima Y."/>
            <person name="Suzuki O."/>
            <person name="Nakagawa S."/>
            <person name="Senoh A."/>
            <person name="Mizoguchi H."/>
            <person name="Goto Y."/>
            <person name="Shimizu F."/>
            <person name="Wakebe H."/>
            <person name="Hishigaki H."/>
            <person name="Watanabe T."/>
            <person name="Sugiyama A."/>
            <person name="Takemoto M."/>
            <person name="Kawakami B."/>
            <person name="Yamazaki M."/>
            <person name="Watanabe K."/>
            <person name="Kumagai A."/>
            <person name="Itakura S."/>
            <person name="Fukuzumi Y."/>
            <person name="Fujimori Y."/>
            <person name="Komiyama M."/>
            <person name="Tashiro H."/>
            <person name="Tanigami A."/>
            <person name="Fujiwara T."/>
            <person name="Ono T."/>
            <person name="Yamada K."/>
            <person name="Fujii Y."/>
            <person name="Ozaki K."/>
            <person name="Hirao M."/>
            <person name="Ohmori Y."/>
            <person name="Kawabata A."/>
            <person name="Hikiji T."/>
            <person name="Kobatake N."/>
            <person name="Inagaki H."/>
            <person name="Ikema Y."/>
            <person name="Okamoto S."/>
            <person name="Okitani R."/>
            <person name="Kawakami T."/>
            <person name="Noguchi S."/>
            <person name="Itoh T."/>
            <person name="Shigeta K."/>
            <person name="Senba T."/>
            <person name="Matsumura K."/>
            <person name="Nakajima Y."/>
            <person name="Mizuno T."/>
            <person name="Morinaga M."/>
            <person name="Sasaki M."/>
            <person name="Togashi T."/>
            <person name="Oyama M."/>
            <person name="Hata H."/>
            <person name="Watanabe M."/>
            <person name="Komatsu T."/>
            <person name="Mizushima-Sugano J."/>
            <person name="Satoh T."/>
            <person name="Shirai Y."/>
            <person name="Takahashi Y."/>
            <person name="Nakagawa K."/>
            <person name="Okumura K."/>
            <person name="Nagase T."/>
            <person name="Nomura N."/>
            <person name="Kikuchi H."/>
            <person name="Masuho Y."/>
            <person name="Yamashita R."/>
            <person name="Nakai K."/>
            <person name="Yada T."/>
            <person name="Nakamura Y."/>
            <person name="Ohara O."/>
            <person name="Isogai T."/>
            <person name="Sugano S."/>
        </authorList>
    </citation>
    <scope>NUCLEOTIDE SEQUENCE [LARGE SCALE MRNA] (ISOFORM 2)</scope>
    <source>
        <tissue>Testis</tissue>
    </source>
</reference>
<reference key="2">
    <citation type="journal article" date="2004" name="Nature">
        <title>The DNA sequence and biology of human chromosome 19.</title>
        <authorList>
            <person name="Grimwood J."/>
            <person name="Gordon L.A."/>
            <person name="Olsen A.S."/>
            <person name="Terry A."/>
            <person name="Schmutz J."/>
            <person name="Lamerdin J.E."/>
            <person name="Hellsten U."/>
            <person name="Goodstein D."/>
            <person name="Couronne O."/>
            <person name="Tran-Gyamfi M."/>
            <person name="Aerts A."/>
            <person name="Altherr M."/>
            <person name="Ashworth L."/>
            <person name="Bajorek E."/>
            <person name="Black S."/>
            <person name="Branscomb E."/>
            <person name="Caenepeel S."/>
            <person name="Carrano A.V."/>
            <person name="Caoile C."/>
            <person name="Chan Y.M."/>
            <person name="Christensen M."/>
            <person name="Cleland C.A."/>
            <person name="Copeland A."/>
            <person name="Dalin E."/>
            <person name="Dehal P."/>
            <person name="Denys M."/>
            <person name="Detter J.C."/>
            <person name="Escobar J."/>
            <person name="Flowers D."/>
            <person name="Fotopulos D."/>
            <person name="Garcia C."/>
            <person name="Georgescu A.M."/>
            <person name="Glavina T."/>
            <person name="Gomez M."/>
            <person name="Gonzales E."/>
            <person name="Groza M."/>
            <person name="Hammon N."/>
            <person name="Hawkins T."/>
            <person name="Haydu L."/>
            <person name="Ho I."/>
            <person name="Huang W."/>
            <person name="Israni S."/>
            <person name="Jett J."/>
            <person name="Kadner K."/>
            <person name="Kimball H."/>
            <person name="Kobayashi A."/>
            <person name="Larionov V."/>
            <person name="Leem S.-H."/>
            <person name="Lopez F."/>
            <person name="Lou Y."/>
            <person name="Lowry S."/>
            <person name="Malfatti S."/>
            <person name="Martinez D."/>
            <person name="McCready P.M."/>
            <person name="Medina C."/>
            <person name="Morgan J."/>
            <person name="Nelson K."/>
            <person name="Nolan M."/>
            <person name="Ovcharenko I."/>
            <person name="Pitluck S."/>
            <person name="Pollard M."/>
            <person name="Popkie A.P."/>
            <person name="Predki P."/>
            <person name="Quan G."/>
            <person name="Ramirez L."/>
            <person name="Rash S."/>
            <person name="Retterer J."/>
            <person name="Rodriguez A."/>
            <person name="Rogers S."/>
            <person name="Salamov A."/>
            <person name="Salazar A."/>
            <person name="She X."/>
            <person name="Smith D."/>
            <person name="Slezak T."/>
            <person name="Solovyev V."/>
            <person name="Thayer N."/>
            <person name="Tice H."/>
            <person name="Tsai M."/>
            <person name="Ustaszewska A."/>
            <person name="Vo N."/>
            <person name="Wagner M."/>
            <person name="Wheeler J."/>
            <person name="Wu K."/>
            <person name="Xie G."/>
            <person name="Yang J."/>
            <person name="Dubchak I."/>
            <person name="Furey T.S."/>
            <person name="DeJong P."/>
            <person name="Dickson M."/>
            <person name="Gordon D."/>
            <person name="Eichler E.E."/>
            <person name="Pennacchio L.A."/>
            <person name="Richardson P."/>
            <person name="Stubbs L."/>
            <person name="Rokhsar D.S."/>
            <person name="Myers R.M."/>
            <person name="Rubin E.M."/>
            <person name="Lucas S.M."/>
        </authorList>
    </citation>
    <scope>NUCLEOTIDE SEQUENCE [LARGE SCALE GENOMIC DNA]</scope>
</reference>
<reference key="3">
    <citation type="submission" date="2005-07" db="EMBL/GenBank/DDBJ databases">
        <authorList>
            <person name="Mural R.J."/>
            <person name="Istrail S."/>
            <person name="Sutton G.G."/>
            <person name="Florea L."/>
            <person name="Halpern A.L."/>
            <person name="Mobarry C.M."/>
            <person name="Lippert R."/>
            <person name="Walenz B."/>
            <person name="Shatkay H."/>
            <person name="Dew I."/>
            <person name="Miller J.R."/>
            <person name="Flanigan M.J."/>
            <person name="Edwards N.J."/>
            <person name="Bolanos R."/>
            <person name="Fasulo D."/>
            <person name="Halldorsson B.V."/>
            <person name="Hannenhalli S."/>
            <person name="Turner R."/>
            <person name="Yooseph S."/>
            <person name="Lu F."/>
            <person name="Nusskern D.R."/>
            <person name="Shue B.C."/>
            <person name="Zheng X.H."/>
            <person name="Zhong F."/>
            <person name="Delcher A.L."/>
            <person name="Huson D.H."/>
            <person name="Kravitz S.A."/>
            <person name="Mouchard L."/>
            <person name="Reinert K."/>
            <person name="Remington K.A."/>
            <person name="Clark A.G."/>
            <person name="Waterman M.S."/>
            <person name="Eichler E.E."/>
            <person name="Adams M.D."/>
            <person name="Hunkapiller M.W."/>
            <person name="Myers E.W."/>
            <person name="Venter J.C."/>
        </authorList>
    </citation>
    <scope>NUCLEOTIDE SEQUENCE [LARGE SCALE GENOMIC DNA]</scope>
</reference>
<reference key="4">
    <citation type="journal article" date="2004" name="Genome Res.">
        <title>The status, quality, and expansion of the NIH full-length cDNA project: the Mammalian Gene Collection (MGC).</title>
        <authorList>
            <consortium name="The MGC Project Team"/>
        </authorList>
    </citation>
    <scope>NUCLEOTIDE SEQUENCE [LARGE SCALE MRNA] (ISOFORM 1)</scope>
    <source>
        <tissue>Eye</tissue>
    </source>
</reference>
<reference key="5">
    <citation type="journal article" date="2014" name="Am. J. Hum. Genet.">
        <title>CCDC151 mutations cause primary ciliary dyskinesia by disruption of the outer dynein arm docking complex formation.</title>
        <authorList>
            <consortium name="UK10K Consortium"/>
            <person name="Hjeij R."/>
            <person name="Onoufriadis A."/>
            <person name="Watson C.M."/>
            <person name="Slagle C.E."/>
            <person name="Klena N.T."/>
            <person name="Dougherty G.W."/>
            <person name="Kurkowiak M."/>
            <person name="Loges N.T."/>
            <person name="Diggle C.P."/>
            <person name="Morante N.F."/>
            <person name="Gabriel G.C."/>
            <person name="Lemke K.L."/>
            <person name="Li Y."/>
            <person name="Pennekamp P."/>
            <person name="Menchen T."/>
            <person name="Konert F."/>
            <person name="Marthin J.K."/>
            <person name="Mans D.A."/>
            <person name="Letteboer S.J."/>
            <person name="Werner C."/>
            <person name="Burgoyne T."/>
            <person name="Westermann C."/>
            <person name="Rutman A."/>
            <person name="Carr I.M."/>
            <person name="O'Callaghan C."/>
            <person name="Moya E."/>
            <person name="Chung E.M."/>
            <person name="Sheridan E."/>
            <person name="Nielsen K.G."/>
            <person name="Roepman R."/>
            <person name="Bartscherer K."/>
            <person name="Burdine R.D."/>
            <person name="Lo C.W."/>
            <person name="Omran H."/>
            <person name="Mitchison H.M."/>
        </authorList>
    </citation>
    <scope>INVOLVEMENT IN CILD30</scope>
    <scope>INTERACTION WITH ODAD1</scope>
    <scope>SUBCELLULAR LOCATION</scope>
    <scope>FUNCTION</scope>
    <scope>SUBUNIT</scope>
</reference>
<reference key="6">
    <citation type="journal article" date="2014" name="Hum. Mutat.">
        <title>Nonsense mutation in coiled-coil domain containing 151 gene (CCDC151) causes primary ciliary dyskinesia.</title>
        <authorList>
            <person name="Alsaadi M.M."/>
            <person name="Erzurumluoglu A.M."/>
            <person name="Rodriguez S."/>
            <person name="Guthrie P.A."/>
            <person name="Gaunt T.R."/>
            <person name="Omar H.Z."/>
            <person name="Mubarak M."/>
            <person name="Alharbi K.K."/>
            <person name="Al-Rikabi A.C."/>
            <person name="Day I.N."/>
        </authorList>
    </citation>
    <scope>INVOLVEMENT IN CILD30</scope>
</reference>
<accession>A5D8V7</accession>
<accession>B4DXT0</accession>
<accession>Q96CG5</accession>
<gene>
    <name evidence="9" type="primary">ODAD3</name>
    <name type="synonym">CCDC151</name>
</gene>
<protein>
    <recommendedName>
        <fullName>Outer dynein arm-docking complex subunit 3</fullName>
    </recommendedName>
    <alternativeName>
        <fullName>Coiled-coil domain-containing protein 151</fullName>
    </alternativeName>
</protein>
<comment type="function">
    <text evidence="5">Component of the outer dynein arm-docking complex (ODA-DC) that mediates outer dynein arms (ODA) binding onto the doublet microtubule (PubMed:25192045). Involved in mediating assembly of both ODAs and their axonemal docking complex onto ciliary microtubules (PubMed:25192045).</text>
</comment>
<comment type="subunit">
    <text evidence="1 5">Component of the outer dynein arm-docking complex along with ODAD1, ODAD2, ODAD4 and CLXN (PubMed:25192045). Interacts with ODAD1 (PubMed:25192045). Interacts with PIERCE1 and PIERCE2; the interactions link the outer dynein arms docking complex (ODA-DC) to the internal microtubule inner proteins (MIP) in cilium axoneme (By similarity).</text>
</comment>
<comment type="interaction">
    <interactant intactId="EBI-8466445">
        <id>A5D8V7</id>
    </interactant>
    <interactant intactId="EBI-348399">
        <id>P22607</id>
        <label>FGFR3</label>
    </interactant>
    <organismsDiffer>false</organismsDiffer>
    <experiments>3</experiments>
</comment>
<comment type="interaction">
    <interactant intactId="EBI-8466445">
        <id>A5D8V7</id>
    </interactant>
    <interactant intactId="EBI-1955541">
        <id>Q53GS7</id>
        <label>GLE1</label>
    </interactant>
    <organismsDiffer>false</organismsDiffer>
    <experiments>3</experiments>
</comment>
<comment type="interaction">
    <interactant intactId="EBI-8466445">
        <id>A5D8V7</id>
    </interactant>
    <interactant intactId="EBI-351506">
        <id>P06396</id>
        <label>GSN</label>
    </interactant>
    <organismsDiffer>false</organismsDiffer>
    <experiments>3</experiments>
</comment>
<comment type="interaction">
    <interactant intactId="EBI-8466445">
        <id>A5D8V7</id>
    </interactant>
    <interactant intactId="EBI-350145">
        <id>P01112</id>
        <label>HRAS</label>
    </interactant>
    <organismsDiffer>false</organismsDiffer>
    <experiments>3</experiments>
</comment>
<comment type="interaction">
    <interactant intactId="EBI-8466445">
        <id>A5D8V7</id>
    </interactant>
    <interactant intactId="EBI-710124">
        <id>O60341</id>
        <label>KDM1A</label>
    </interactant>
    <organismsDiffer>false</organismsDiffer>
    <experiments>2</experiments>
</comment>
<comment type="interaction">
    <interactant intactId="EBI-8466445">
        <id>A5D8V7</id>
    </interactant>
    <interactant intactId="EBI-948266">
        <id>O14901</id>
        <label>KLF11</label>
    </interactant>
    <organismsDiffer>false</organismsDiffer>
    <experiments>3</experiments>
</comment>
<comment type="interaction">
    <interactant intactId="EBI-8466445">
        <id>A5D8V7</id>
    </interactant>
    <interactant intactId="EBI-2952736">
        <id>Q2M2I5</id>
        <label>KRT24</label>
    </interactant>
    <organismsDiffer>false</organismsDiffer>
    <experiments>3</experiments>
</comment>
<comment type="interaction">
    <interactant intactId="EBI-8466445">
        <id>A5D8V7</id>
    </interactant>
    <interactant intactId="EBI-3044087">
        <id>Q7Z3Y8</id>
        <label>KRT27</label>
    </interactant>
    <organismsDiffer>false</organismsDiffer>
    <experiments>3</experiments>
</comment>
<comment type="interaction">
    <interactant intactId="EBI-8466445">
        <id>A5D8V7</id>
    </interactant>
    <interactant intactId="EBI-11522433">
        <id>Q5JR59-3</id>
        <label>MTUS2</label>
    </interactant>
    <organismsDiffer>false</organismsDiffer>
    <experiments>3</experiments>
</comment>
<comment type="interaction">
    <interactant intactId="EBI-8466445">
        <id>A5D8V7</id>
    </interactant>
    <interactant intactId="EBI-10172876">
        <id>Q7Z6G3-2</id>
        <label>NECAB2</label>
    </interactant>
    <organismsDiffer>false</organismsDiffer>
    <experiments>3</experiments>
</comment>
<comment type="interaction">
    <interactant intactId="EBI-8466445">
        <id>A5D8V7</id>
    </interactant>
    <interactant intactId="EBI-10173858">
        <id>Q96M63</id>
        <label>ODAD1</label>
    </interactant>
    <organismsDiffer>false</organismsDiffer>
    <experiments>3</experiments>
</comment>
<comment type="interaction">
    <interactant intactId="EBI-8466445">
        <id>A5D8V7</id>
    </interactant>
    <interactant intactId="EBI-447043">
        <id>Q15276</id>
        <label>RABEP1</label>
    </interactant>
    <organismsDiffer>false</organismsDiffer>
    <experiments>3</experiments>
</comment>
<comment type="interaction">
    <interactant intactId="EBI-8466445">
        <id>A5D8V7</id>
    </interactant>
    <interactant intactId="EBI-5235340">
        <id>Q7Z699</id>
        <label>SPRED1</label>
    </interactant>
    <organismsDiffer>false</organismsDiffer>
    <experiments>3</experiments>
</comment>
<comment type="interaction">
    <interactant intactId="EBI-8466445">
        <id>A5D8V7</id>
    </interactant>
    <interactant intactId="EBI-349968">
        <id>O43463</id>
        <label>SUV39H1</label>
    </interactant>
    <organismsDiffer>false</organismsDiffer>
    <experiments>2</experiments>
</comment>
<comment type="interaction">
    <interactant intactId="EBI-8466445">
        <id>A5D8V7</id>
    </interactant>
    <interactant intactId="EBI-1105213">
        <id>Q9UBB9</id>
        <label>TFIP11</label>
    </interactant>
    <organismsDiffer>false</organismsDiffer>
    <experiments>6</experiments>
</comment>
<comment type="interaction">
    <interactant intactId="EBI-8466445">
        <id>A5D8V7</id>
    </interactant>
    <interactant intactId="EBI-6116822">
        <id>Q8N3L3</id>
        <label>TXLNB</label>
    </interactant>
    <organismsDiffer>false</organismsDiffer>
    <experiments>3</experiments>
</comment>
<comment type="interaction">
    <interactant intactId="EBI-8466445">
        <id>A5D8V7</id>
    </interactant>
    <interactant intactId="EBI-741480">
        <id>Q9UMX0</id>
        <label>UBQLN1</label>
    </interactant>
    <organismsDiffer>false</organismsDiffer>
    <experiments>3</experiments>
</comment>
<comment type="interaction">
    <interactant intactId="EBI-8466445">
        <id>A5D8V7</id>
    </interactant>
    <interactant intactId="EBI-739895">
        <id>Q8N6Y0</id>
        <label>USHBP1</label>
    </interactant>
    <organismsDiffer>false</organismsDiffer>
    <experiments>3</experiments>
</comment>
<comment type="interaction">
    <interactant intactId="EBI-10173824">
        <id>A5D8V7-2</id>
    </interactant>
    <interactant intactId="EBI-10172876">
        <id>Q7Z6G3-2</id>
        <label>NECAB2</label>
    </interactant>
    <organismsDiffer>false</organismsDiffer>
    <experiments>3</experiments>
</comment>
<comment type="interaction">
    <interactant intactId="EBI-10173824">
        <id>A5D8V7-2</id>
    </interactant>
    <interactant intactId="EBI-10173858">
        <id>Q96M63</id>
        <label>ODAD1</label>
    </interactant>
    <organismsDiffer>false</organismsDiffer>
    <experiments>3</experiments>
</comment>
<comment type="interaction">
    <interactant intactId="EBI-10173824">
        <id>A5D8V7-2</id>
    </interactant>
    <interactant intactId="EBI-1105213">
        <id>Q9UBB9</id>
        <label>TFIP11</label>
    </interactant>
    <organismsDiffer>false</organismsDiffer>
    <experiments>3</experiments>
</comment>
<comment type="interaction">
    <interactant intactId="EBI-10173824">
        <id>A5D8V7-2</id>
    </interactant>
    <interactant intactId="EBI-6116822">
        <id>Q8N3L3</id>
        <label>TXLNB</label>
    </interactant>
    <organismsDiffer>false</organismsDiffer>
    <experiments>3</experiments>
</comment>
<comment type="subcellular location">
    <subcellularLocation>
        <location evidence="2">Cytoplasm</location>
        <location evidence="2">Cytoskeleton</location>
        <location evidence="2">Cilium basal body</location>
    </subcellularLocation>
    <subcellularLocation>
        <location evidence="2">Cytoplasm</location>
        <location evidence="2">Cytoskeleton</location>
        <location evidence="2">Microtubule organizing center</location>
        <location evidence="2">Centrosome</location>
        <location evidence="2">Centriole</location>
    </subcellularLocation>
    <subcellularLocation>
        <location evidence="5">Cytoplasm</location>
        <location evidence="5">Cytoskeleton</location>
        <location evidence="5">Cilium axoneme</location>
    </subcellularLocation>
</comment>
<comment type="alternative products">
    <event type="alternative splicing"/>
    <isoform>
        <id>A5D8V7-1</id>
        <name>1</name>
        <sequence type="displayed"/>
    </isoform>
    <isoform>
        <id>A5D8V7-2</id>
        <name>2</name>
        <sequence type="described" ref="VSP_056903"/>
    </isoform>
</comment>
<comment type="disease" evidence="5 6">
    <disease id="DI-04247">
        <name>Ciliary dyskinesia, primary, 30</name>
        <acronym>CILD30</acronym>
        <description>A disorder characterized by abnormalities of motile cilia. Respiratory infections leading to chronic inflammation and bronchiectasis are recurrent, due to defects in the respiratory cilia. Patients may exhibit randomization of left-right body asymmetry and situs inversus, due to dysfunction of monocilia at the embryonic node. Primary ciliary dyskinesia associated with situs inversus is referred to as Kartagener syndrome.</description>
        <dbReference type="MIM" id="616037"/>
    </disease>
    <text>The disease is caused by variants affecting the gene represented in this entry.</text>
</comment>
<organism>
    <name type="scientific">Homo sapiens</name>
    <name type="common">Human</name>
    <dbReference type="NCBI Taxonomy" id="9606"/>
    <lineage>
        <taxon>Eukaryota</taxon>
        <taxon>Metazoa</taxon>
        <taxon>Chordata</taxon>
        <taxon>Craniata</taxon>
        <taxon>Vertebrata</taxon>
        <taxon>Euteleostomi</taxon>
        <taxon>Mammalia</taxon>
        <taxon>Eutheria</taxon>
        <taxon>Euarchontoglires</taxon>
        <taxon>Primates</taxon>
        <taxon>Haplorrhini</taxon>
        <taxon>Catarrhini</taxon>
        <taxon>Hominidae</taxon>
        <taxon>Homo</taxon>
    </lineage>
</organism>